<name>DAD1_EREGS</name>
<organism>
    <name type="scientific">Eremothecium gossypii (strain ATCC 10895 / CBS 109.51 / FGSC 9923 / NRRL Y-1056)</name>
    <name type="common">Yeast</name>
    <name type="synonym">Ashbya gossypii</name>
    <dbReference type="NCBI Taxonomy" id="284811"/>
    <lineage>
        <taxon>Eukaryota</taxon>
        <taxon>Fungi</taxon>
        <taxon>Dikarya</taxon>
        <taxon>Ascomycota</taxon>
        <taxon>Saccharomycotina</taxon>
        <taxon>Saccharomycetes</taxon>
        <taxon>Saccharomycetales</taxon>
        <taxon>Saccharomycetaceae</taxon>
        <taxon>Eremothecium</taxon>
    </lineage>
</organism>
<proteinExistence type="inferred from homology"/>
<sequence length="114" mass="12043">MIMSKDIATTPELSEPDKYFVEQRDLLLQEITSTLDSILNNLNGLNISLENSIAVGKEFESVSELWKVFYDGLANGAAPGVAAANPSSQDLPTEPVAAHQNAAAGNSDAPAPSQ</sequence>
<dbReference type="EMBL" id="AE016814">
    <property type="protein sequence ID" value="AAS50552.1"/>
    <property type="molecule type" value="Genomic_DNA"/>
</dbReference>
<dbReference type="RefSeq" id="NP_982728.1">
    <property type="nucleotide sequence ID" value="NM_208081.1"/>
</dbReference>
<dbReference type="SMR" id="Q75E95"/>
<dbReference type="FunCoup" id="Q75E95">
    <property type="interactions" value="38"/>
</dbReference>
<dbReference type="STRING" id="284811.Q75E95"/>
<dbReference type="EnsemblFungi" id="AAS50552">
    <property type="protein sequence ID" value="AAS50552"/>
    <property type="gene ID" value="AGOS_AAR185W"/>
</dbReference>
<dbReference type="GeneID" id="4618765"/>
<dbReference type="KEGG" id="ago:AGOS_AAR185W"/>
<dbReference type="eggNOG" id="ENOG502SBWQ">
    <property type="taxonomic scope" value="Eukaryota"/>
</dbReference>
<dbReference type="HOGENOM" id="CLU_142427_2_0_1"/>
<dbReference type="InParanoid" id="Q75E95"/>
<dbReference type="OMA" id="SELWKVF"/>
<dbReference type="OrthoDB" id="5566853at2759"/>
<dbReference type="Proteomes" id="UP000000591">
    <property type="component" value="Chromosome I"/>
</dbReference>
<dbReference type="GO" id="GO:0005737">
    <property type="term" value="C:cytoplasm"/>
    <property type="evidence" value="ECO:0007669"/>
    <property type="project" value="UniProtKB-KW"/>
</dbReference>
<dbReference type="GO" id="GO:0042729">
    <property type="term" value="C:DASH complex"/>
    <property type="evidence" value="ECO:0000250"/>
    <property type="project" value="UniProtKB"/>
</dbReference>
<dbReference type="GO" id="GO:0072686">
    <property type="term" value="C:mitotic spindle"/>
    <property type="evidence" value="ECO:0007669"/>
    <property type="project" value="InterPro"/>
</dbReference>
<dbReference type="GO" id="GO:0044732">
    <property type="term" value="C:mitotic spindle pole body"/>
    <property type="evidence" value="ECO:0000318"/>
    <property type="project" value="GO_Central"/>
</dbReference>
<dbReference type="GO" id="GO:0005876">
    <property type="term" value="C:spindle microtubule"/>
    <property type="evidence" value="ECO:0000318"/>
    <property type="project" value="GO_Central"/>
</dbReference>
<dbReference type="GO" id="GO:0051010">
    <property type="term" value="F:microtubule plus-end binding"/>
    <property type="evidence" value="ECO:0007669"/>
    <property type="project" value="EnsemblFungi"/>
</dbReference>
<dbReference type="GO" id="GO:0008608">
    <property type="term" value="P:attachment of spindle microtubules to kinetochore"/>
    <property type="evidence" value="ECO:0000250"/>
    <property type="project" value="UniProtKB"/>
</dbReference>
<dbReference type="GO" id="GO:0051301">
    <property type="term" value="P:cell division"/>
    <property type="evidence" value="ECO:0007669"/>
    <property type="project" value="UniProtKB-KW"/>
</dbReference>
<dbReference type="GO" id="GO:1990758">
    <property type="term" value="P:mitotic sister chromatid biorientation"/>
    <property type="evidence" value="ECO:0000250"/>
    <property type="project" value="UniProtKB"/>
</dbReference>
<dbReference type="GO" id="GO:0051987">
    <property type="term" value="P:positive regulation of attachment of spindle microtubules to kinetochore"/>
    <property type="evidence" value="ECO:0007669"/>
    <property type="project" value="EnsemblFungi"/>
</dbReference>
<dbReference type="GO" id="GO:0031116">
    <property type="term" value="P:positive regulation of microtubule polymerization"/>
    <property type="evidence" value="ECO:0007669"/>
    <property type="project" value="EnsemblFungi"/>
</dbReference>
<dbReference type="GO" id="GO:1990976">
    <property type="term" value="P:protein transport along microtubule to mitotic spindle pole body"/>
    <property type="evidence" value="ECO:0000250"/>
    <property type="project" value="UniProtKB"/>
</dbReference>
<dbReference type="InterPro" id="IPR013958">
    <property type="entry name" value="DASH_Dad1"/>
</dbReference>
<dbReference type="PANTHER" id="PTHR28025">
    <property type="entry name" value="DASH COMPLEX SUBUNIT DAD1"/>
    <property type="match status" value="1"/>
</dbReference>
<dbReference type="PANTHER" id="PTHR28025:SF1">
    <property type="entry name" value="DASH COMPLEX SUBUNIT DAD1"/>
    <property type="match status" value="1"/>
</dbReference>
<dbReference type="Pfam" id="PF08649">
    <property type="entry name" value="DASH_Dad1"/>
    <property type="match status" value="1"/>
</dbReference>
<evidence type="ECO:0000250" key="1">
    <source>
        <dbReference type="UniProtKB" id="P87297"/>
    </source>
</evidence>
<evidence type="ECO:0000250" key="2">
    <source>
        <dbReference type="UniProtKB" id="Q12248"/>
    </source>
</evidence>
<evidence type="ECO:0000256" key="3">
    <source>
        <dbReference type="SAM" id="MobiDB-lite"/>
    </source>
</evidence>
<evidence type="ECO:0000305" key="4"/>
<reference key="1">
    <citation type="journal article" date="2004" name="Science">
        <title>The Ashbya gossypii genome as a tool for mapping the ancient Saccharomyces cerevisiae genome.</title>
        <authorList>
            <person name="Dietrich F.S."/>
            <person name="Voegeli S."/>
            <person name="Brachat S."/>
            <person name="Lerch A."/>
            <person name="Gates K."/>
            <person name="Steiner S."/>
            <person name="Mohr C."/>
            <person name="Poehlmann R."/>
            <person name="Luedi P."/>
            <person name="Choi S."/>
            <person name="Wing R.A."/>
            <person name="Flavier A."/>
            <person name="Gaffney T.D."/>
            <person name="Philippsen P."/>
        </authorList>
    </citation>
    <scope>NUCLEOTIDE SEQUENCE [LARGE SCALE GENOMIC DNA]</scope>
    <source>
        <strain>ATCC 10895 / CBS 109.51 / FGSC 9923 / NRRL Y-1056</strain>
    </source>
</reference>
<reference key="2">
    <citation type="journal article" date="2013" name="G3 (Bethesda)">
        <title>Genomes of Ashbya fungi isolated from insects reveal four mating-type loci, numerous translocations, lack of transposons, and distinct gene duplications.</title>
        <authorList>
            <person name="Dietrich F.S."/>
            <person name="Voegeli S."/>
            <person name="Kuo S."/>
            <person name="Philippsen P."/>
        </authorList>
    </citation>
    <scope>GENOME REANNOTATION</scope>
    <source>
        <strain>ATCC 10895 / CBS 109.51 / FGSC 9923 / NRRL Y-1056</strain>
    </source>
</reference>
<feature type="chain" id="PRO_0000127608" description="DASH complex subunit DAD1">
    <location>
        <begin position="1"/>
        <end position="114"/>
    </location>
</feature>
<feature type="region of interest" description="Disordered" evidence="3">
    <location>
        <begin position="80"/>
        <end position="114"/>
    </location>
</feature>
<keyword id="KW-0131">Cell cycle</keyword>
<keyword id="KW-0132">Cell division</keyword>
<keyword id="KW-0137">Centromere</keyword>
<keyword id="KW-0158">Chromosome</keyword>
<keyword id="KW-0159">Chromosome partition</keyword>
<keyword id="KW-0963">Cytoplasm</keyword>
<keyword id="KW-0206">Cytoskeleton</keyword>
<keyword id="KW-0995">Kinetochore</keyword>
<keyword id="KW-0493">Microtubule</keyword>
<keyword id="KW-0498">Mitosis</keyword>
<keyword id="KW-0539">Nucleus</keyword>
<keyword id="KW-1185">Reference proteome</keyword>
<comment type="function">
    <text evidence="2">Component of the DASH complex that connects microtubules with kinetochores and couples microtubule depolymerisation to chromosome movement; it is involved in retrieving kinetochores to the spindle poles before their re-orientation on the spindle in early mitosis and allows microtubule depolymerization to pull chromosomes apart and resist detachment during anaphase. Kinetochores, consisting of a centromere-associated inner segment and a microtubule-contacting outer segment, play a crucial role in chromosome segregation by mediating the physical connection between centromeric DNA and microtubules. Kinetochores also serve as an input point for the spindle assembly checkpoint, which delays anaphase until all chromosomes have bioriented on the mitotic spindle.</text>
</comment>
<comment type="subunit">
    <text evidence="1 2">Component of the DASH complex consisting of ASK1, DAD1, DAD2, DAD3, DAD4, DAM1, DUO1, HSK3, SPC19 and SPC34, with a stoichiometry of one copy of each subunit per complex. Multiple DASH complexes oligomerize to form a ring that encircles spindle microtubules and organizes the rod-like NDC80 complexes of the outer kinetochore. DASH complex oligomerization strengthens microtubule attachments (By similarity). On cytoplasmic microtubules, DASH complexes appear to form patches instead of rings (By similarity).</text>
</comment>
<comment type="subcellular location">
    <subcellularLocation>
        <location evidence="2">Nucleus</location>
    </subcellularLocation>
    <subcellularLocation>
        <location evidence="2">Cytoplasm</location>
        <location evidence="2">Cytoskeleton</location>
        <location evidence="2">Spindle</location>
    </subcellularLocation>
    <subcellularLocation>
        <location evidence="2">Chromosome</location>
        <location evidence="2">Centromere</location>
        <location evidence="2">Kinetochore</location>
    </subcellularLocation>
</comment>
<comment type="similarity">
    <text evidence="4">Belongs to the DASH complex DAD1 family.</text>
</comment>
<accession>Q75E95</accession>
<gene>
    <name type="primary">DAD1</name>
    <name type="ordered locus">AAR185W</name>
</gene>
<protein>
    <recommendedName>
        <fullName>DASH complex subunit DAD1</fullName>
    </recommendedName>
    <alternativeName>
        <fullName>Outer kinetochore protein DAD1</fullName>
    </alternativeName>
</protein>